<gene>
    <name evidence="1" type="primary">nqrB</name>
    <name type="ordered locus">PA14_25305</name>
</gene>
<comment type="function">
    <text evidence="1">NQR complex catalyzes the reduction of ubiquinone-1 to ubiquinol by two successive reactions, coupled with the transport of Na(+) ions from the cytoplasm to the periplasm. NqrA to NqrE are probably involved in the second step, the conversion of ubisemiquinone to ubiquinol.</text>
</comment>
<comment type="catalytic activity">
    <reaction evidence="1">
        <text>a ubiquinone + n Na(+)(in) + NADH + H(+) = a ubiquinol + n Na(+)(out) + NAD(+)</text>
        <dbReference type="Rhea" id="RHEA:47748"/>
        <dbReference type="Rhea" id="RHEA-COMP:9565"/>
        <dbReference type="Rhea" id="RHEA-COMP:9566"/>
        <dbReference type="ChEBI" id="CHEBI:15378"/>
        <dbReference type="ChEBI" id="CHEBI:16389"/>
        <dbReference type="ChEBI" id="CHEBI:17976"/>
        <dbReference type="ChEBI" id="CHEBI:29101"/>
        <dbReference type="ChEBI" id="CHEBI:57540"/>
        <dbReference type="ChEBI" id="CHEBI:57945"/>
        <dbReference type="EC" id="7.2.1.1"/>
    </reaction>
</comment>
<comment type="cofactor">
    <cofactor evidence="1">
        <name>FMN</name>
        <dbReference type="ChEBI" id="CHEBI:58210"/>
    </cofactor>
</comment>
<comment type="subunit">
    <text evidence="1">Composed of six subunits; NqrA, NqrB, NqrC, NqrD, NqrE and NqrF.</text>
</comment>
<comment type="subcellular location">
    <subcellularLocation>
        <location evidence="1">Cell inner membrane</location>
        <topology evidence="1">Multi-pass membrane protein</topology>
    </subcellularLocation>
</comment>
<comment type="similarity">
    <text evidence="1">Belongs to the NqrB/RnfD family.</text>
</comment>
<organism>
    <name type="scientific">Pseudomonas aeruginosa (strain UCBPP-PA14)</name>
    <dbReference type="NCBI Taxonomy" id="208963"/>
    <lineage>
        <taxon>Bacteria</taxon>
        <taxon>Pseudomonadati</taxon>
        <taxon>Pseudomonadota</taxon>
        <taxon>Gammaproteobacteria</taxon>
        <taxon>Pseudomonadales</taxon>
        <taxon>Pseudomonadaceae</taxon>
        <taxon>Pseudomonas</taxon>
    </lineage>
</organism>
<protein>
    <recommendedName>
        <fullName evidence="1">Na(+)-translocating NADH-quinone reductase subunit B</fullName>
        <shortName evidence="1">Na(+)-NQR subunit B</shortName>
        <shortName evidence="1">Na(+)-translocating NQR subunit B</shortName>
        <ecNumber evidence="1">7.2.1.1</ecNumber>
    </recommendedName>
    <alternativeName>
        <fullName evidence="1">NQR complex subunit B</fullName>
    </alternativeName>
    <alternativeName>
        <fullName evidence="1">NQR-1 subunit B</fullName>
    </alternativeName>
</protein>
<reference key="1">
    <citation type="journal article" date="2006" name="Genome Biol.">
        <title>Genomic analysis reveals that Pseudomonas aeruginosa virulence is combinatorial.</title>
        <authorList>
            <person name="Lee D.G."/>
            <person name="Urbach J.M."/>
            <person name="Wu G."/>
            <person name="Liberati N.T."/>
            <person name="Feinbaum R.L."/>
            <person name="Miyata S."/>
            <person name="Diggins L.T."/>
            <person name="He J."/>
            <person name="Saucier M."/>
            <person name="Deziel E."/>
            <person name="Friedman L."/>
            <person name="Li L."/>
            <person name="Grills G."/>
            <person name="Montgomery K."/>
            <person name="Kucherlapati R."/>
            <person name="Rahme L.G."/>
            <person name="Ausubel F.M."/>
        </authorList>
    </citation>
    <scope>NUCLEOTIDE SEQUENCE [LARGE SCALE GENOMIC DNA]</scope>
    <source>
        <strain>UCBPP-PA14</strain>
    </source>
</reference>
<sequence length="403" mass="44069">MGLRNLLDKVEHHFEKGGRYEKWYPLYEAVDTFLYRPGSVTRTTAHVRDGIDLKRMMIIVWLCTFPAMFFGMYNVGHQANLIFAQSPDLLSAQDGWRFALIGALAGFDPNSLWDCLVQGAAYFLPVYLTTFIVGGFWEVLFASIRRHEVNEGFFVTSVLFALTLPPSVPLWQVALGISFGVVLGKEVFGGTGKNFLNPALVGRAFLFFAYPAQMSGDAVWTSVDGFAGATSLSLAAAGGVDNILGHGLTWMDAFLGHMQGSMGETSTLAIFIGGAVLLLTRIASWRIVAGVMLGMVAMSYLFNAIGSASNPMFAMPWYWHLVTGGFAFGMIFMATDPVSASMTDTGKWLFGALIGVMVMLIRVVNPAFPEGMMLAILFANLFAPLIDHFVVQANIKRRLARNG</sequence>
<accession>Q02PG2</accession>
<dbReference type="EC" id="7.2.1.1" evidence="1"/>
<dbReference type="EMBL" id="CP000438">
    <property type="protein sequence ID" value="ABJ15647.1"/>
    <property type="molecule type" value="Genomic_DNA"/>
</dbReference>
<dbReference type="RefSeq" id="WP_003109478.1">
    <property type="nucleotide sequence ID" value="NZ_CP034244.1"/>
</dbReference>
<dbReference type="SMR" id="Q02PG2"/>
<dbReference type="KEGG" id="pau:PA14_25305"/>
<dbReference type="PseudoCAP" id="PA14_25305"/>
<dbReference type="HOGENOM" id="CLU_042020_1_1_6"/>
<dbReference type="BioCyc" id="PAER208963:G1G74-2109-MONOMER"/>
<dbReference type="Proteomes" id="UP000000653">
    <property type="component" value="Chromosome"/>
</dbReference>
<dbReference type="GO" id="GO:0005886">
    <property type="term" value="C:plasma membrane"/>
    <property type="evidence" value="ECO:0007669"/>
    <property type="project" value="UniProtKB-SubCell"/>
</dbReference>
<dbReference type="GO" id="GO:0010181">
    <property type="term" value="F:FMN binding"/>
    <property type="evidence" value="ECO:0007669"/>
    <property type="project" value="InterPro"/>
</dbReference>
<dbReference type="GO" id="GO:0016655">
    <property type="term" value="F:oxidoreductase activity, acting on NAD(P)H, quinone or similar compound as acceptor"/>
    <property type="evidence" value="ECO:0007669"/>
    <property type="project" value="UniProtKB-UniRule"/>
</dbReference>
<dbReference type="GO" id="GO:0022904">
    <property type="term" value="P:respiratory electron transport chain"/>
    <property type="evidence" value="ECO:0007669"/>
    <property type="project" value="InterPro"/>
</dbReference>
<dbReference type="GO" id="GO:0006814">
    <property type="term" value="P:sodium ion transport"/>
    <property type="evidence" value="ECO:0007669"/>
    <property type="project" value="UniProtKB-UniRule"/>
</dbReference>
<dbReference type="GO" id="GO:0055085">
    <property type="term" value="P:transmembrane transport"/>
    <property type="evidence" value="ECO:0007669"/>
    <property type="project" value="InterPro"/>
</dbReference>
<dbReference type="HAMAP" id="MF_00426">
    <property type="entry name" value="NqrB"/>
    <property type="match status" value="1"/>
</dbReference>
<dbReference type="InterPro" id="IPR010966">
    <property type="entry name" value="NqrB"/>
</dbReference>
<dbReference type="InterPro" id="IPR004338">
    <property type="entry name" value="NqrB/RnfD"/>
</dbReference>
<dbReference type="NCBIfam" id="TIGR01937">
    <property type="entry name" value="nqrB"/>
    <property type="match status" value="1"/>
</dbReference>
<dbReference type="NCBIfam" id="NF003756">
    <property type="entry name" value="PRK05349.1"/>
    <property type="match status" value="1"/>
</dbReference>
<dbReference type="PANTHER" id="PTHR30578">
    <property type="entry name" value="ELECTRON TRANSPORT COMPLEX PROTEIN RNFD"/>
    <property type="match status" value="1"/>
</dbReference>
<dbReference type="PANTHER" id="PTHR30578:SF1">
    <property type="entry name" value="NA(+)-TRANSLOCATING NADH-QUINONE REDUCTASE SUBUNIT B"/>
    <property type="match status" value="1"/>
</dbReference>
<dbReference type="Pfam" id="PF03116">
    <property type="entry name" value="NQR2_RnfD_RnfE"/>
    <property type="match status" value="1"/>
</dbReference>
<dbReference type="PIRSF" id="PIRSF016055">
    <property type="entry name" value="NADH-UbQ_OxRdtase_B_su"/>
    <property type="match status" value="1"/>
</dbReference>
<evidence type="ECO:0000255" key="1">
    <source>
        <dbReference type="HAMAP-Rule" id="MF_00426"/>
    </source>
</evidence>
<proteinExistence type="inferred from homology"/>
<keyword id="KW-0997">Cell inner membrane</keyword>
<keyword id="KW-1003">Cell membrane</keyword>
<keyword id="KW-0285">Flavoprotein</keyword>
<keyword id="KW-0288">FMN</keyword>
<keyword id="KW-0406">Ion transport</keyword>
<keyword id="KW-0472">Membrane</keyword>
<keyword id="KW-0520">NAD</keyword>
<keyword id="KW-0597">Phosphoprotein</keyword>
<keyword id="KW-0915">Sodium</keyword>
<keyword id="KW-0739">Sodium transport</keyword>
<keyword id="KW-1278">Translocase</keyword>
<keyword id="KW-0812">Transmembrane</keyword>
<keyword id="KW-1133">Transmembrane helix</keyword>
<keyword id="KW-0813">Transport</keyword>
<keyword id="KW-0830">Ubiquinone</keyword>
<feature type="chain" id="PRO_1000060144" description="Na(+)-translocating NADH-quinone reductase subunit B">
    <location>
        <begin position="1"/>
        <end position="403"/>
    </location>
</feature>
<feature type="transmembrane region" description="Helical" evidence="1">
    <location>
        <begin position="56"/>
        <end position="76"/>
    </location>
</feature>
<feature type="transmembrane region" description="Helical" evidence="1">
    <location>
        <begin position="121"/>
        <end position="141"/>
    </location>
</feature>
<feature type="transmembrane region" description="Helical" evidence="1">
    <location>
        <begin position="164"/>
        <end position="184"/>
    </location>
</feature>
<feature type="transmembrane region" description="Helical" evidence="1">
    <location>
        <begin position="225"/>
        <end position="245"/>
    </location>
</feature>
<feature type="transmembrane region" description="Helical" evidence="1">
    <location>
        <begin position="260"/>
        <end position="280"/>
    </location>
</feature>
<feature type="transmembrane region" description="Helical" evidence="1">
    <location>
        <begin position="287"/>
        <end position="307"/>
    </location>
</feature>
<feature type="transmembrane region" description="Helical" evidence="1">
    <location>
        <begin position="312"/>
        <end position="332"/>
    </location>
</feature>
<feature type="transmembrane region" description="Helical" evidence="1">
    <location>
        <begin position="348"/>
        <end position="368"/>
    </location>
</feature>
<feature type="transmembrane region" description="Helical" evidence="1">
    <location>
        <begin position="371"/>
        <end position="391"/>
    </location>
</feature>
<feature type="modified residue" description="FMN phosphoryl threonine" evidence="1">
    <location>
        <position position="230"/>
    </location>
</feature>
<name>NQRB_PSEAB</name>